<name>YE020_YEAST</name>
<keyword id="KW-0732">Signal</keyword>
<dbReference type="EMBL" id="U18530">
    <property type="status" value="NOT_ANNOTATED_CDS"/>
    <property type="molecule type" value="Genomic_DNA"/>
</dbReference>
<dbReference type="PaxDb" id="4932-YEL020C-B"/>
<dbReference type="TopDownProteomics" id="P0C5M6"/>
<dbReference type="EnsemblFungi" id="YEL020C-B_mRNA">
    <property type="protein sequence ID" value="YEL020C-B"/>
    <property type="gene ID" value="YEL020C-B"/>
</dbReference>
<dbReference type="AGR" id="SGD:S000028544"/>
<dbReference type="SGD" id="S000028544">
    <property type="gene designation" value="YEL020C-B"/>
</dbReference>
<dbReference type="HOGENOM" id="CLU_2850987_0_0_1"/>
<protein>
    <recommendedName>
        <fullName>Putative uncharacterized protein YEL020C-B</fullName>
    </recommendedName>
</protein>
<feature type="signal peptide" evidence="1">
    <location>
        <begin position="1"/>
        <end position="16"/>
    </location>
</feature>
<feature type="chain" id="PRO_0000309024" description="Putative uncharacterized protein YEL020C-B">
    <location>
        <begin position="17"/>
        <end position="65"/>
    </location>
</feature>
<accession>P0C5M6</accession>
<evidence type="ECO:0000255" key="1"/>
<evidence type="ECO:0000305" key="2"/>
<evidence type="ECO:0000305" key="3">
    <source>
    </source>
</evidence>
<sequence length="65" mass="7490">MMHVCSLLVSFDVVKSLTQSVKHLSTRLEYKRMKSFICFCSTTFWNSCCSLEFNASIFTVLSYCS</sequence>
<reference key="1">
    <citation type="journal article" date="1997" name="Nature">
        <title>The nucleotide sequence of Saccharomyces cerevisiae chromosome V.</title>
        <authorList>
            <person name="Dietrich F.S."/>
            <person name="Mulligan J.T."/>
            <person name="Hennessy K.M."/>
            <person name="Yelton M.A."/>
            <person name="Allen E."/>
            <person name="Araujo R."/>
            <person name="Aviles E."/>
            <person name="Berno A."/>
            <person name="Brennan T."/>
            <person name="Carpenter J."/>
            <person name="Chen E."/>
            <person name="Cherry J.M."/>
            <person name="Chung E."/>
            <person name="Duncan M."/>
            <person name="Guzman E."/>
            <person name="Hartzell G."/>
            <person name="Hunicke-Smith S."/>
            <person name="Hyman R.W."/>
            <person name="Kayser A."/>
            <person name="Komp C."/>
            <person name="Lashkari D."/>
            <person name="Lew H."/>
            <person name="Lin D."/>
            <person name="Mosedale D."/>
            <person name="Nakahara K."/>
            <person name="Namath A."/>
            <person name="Norgren R."/>
            <person name="Oefner P."/>
            <person name="Oh C."/>
            <person name="Petel F.X."/>
            <person name="Roberts D."/>
            <person name="Sehl P."/>
            <person name="Schramm S."/>
            <person name="Shogren T."/>
            <person name="Smith V."/>
            <person name="Taylor P."/>
            <person name="Wei Y."/>
            <person name="Botstein D."/>
            <person name="Davis R.W."/>
        </authorList>
    </citation>
    <scope>NUCLEOTIDE SEQUENCE [LARGE SCALE GENOMIC DNA]</scope>
    <source>
        <strain>ATCC 204508 / S288c</strain>
    </source>
</reference>
<reference key="2">
    <citation type="journal article" date="2014" name="G3 (Bethesda)">
        <title>The reference genome sequence of Saccharomyces cerevisiae: Then and now.</title>
        <authorList>
            <person name="Engel S.R."/>
            <person name="Dietrich F.S."/>
            <person name="Fisk D.G."/>
            <person name="Binkley G."/>
            <person name="Balakrishnan R."/>
            <person name="Costanzo M.C."/>
            <person name="Dwight S.S."/>
            <person name="Hitz B.C."/>
            <person name="Karra K."/>
            <person name="Nash R.S."/>
            <person name="Weng S."/>
            <person name="Wong E.D."/>
            <person name="Lloyd P."/>
            <person name="Skrzypek M.S."/>
            <person name="Miyasato S.R."/>
            <person name="Simison M."/>
            <person name="Cherry J.M."/>
        </authorList>
    </citation>
    <scope>GENOME REANNOTATION</scope>
    <source>
        <strain>ATCC 204508 / S288c</strain>
    </source>
</reference>
<reference key="3">
    <citation type="journal article" date="2003" name="Genome Res.">
        <title>Systematic discovery of new genes in the Saccharomyces cerevisiae genome.</title>
        <authorList>
            <person name="Kessler M.M."/>
            <person name="Zeng Q."/>
            <person name="Hogan S."/>
            <person name="Cook R."/>
            <person name="Morales A.J."/>
            <person name="Cottarel G."/>
        </authorList>
    </citation>
    <scope>GENOME REANNOTATION</scope>
</reference>
<proteinExistence type="uncertain"/>
<gene>
    <name type="ordered locus">YEL020C-B</name>
    <name type="ORF">smORF171</name>
</gene>
<organism>
    <name type="scientific">Saccharomyces cerevisiae (strain ATCC 204508 / S288c)</name>
    <name type="common">Baker's yeast</name>
    <dbReference type="NCBI Taxonomy" id="559292"/>
    <lineage>
        <taxon>Eukaryota</taxon>
        <taxon>Fungi</taxon>
        <taxon>Dikarya</taxon>
        <taxon>Ascomycota</taxon>
        <taxon>Saccharomycotina</taxon>
        <taxon>Saccharomycetes</taxon>
        <taxon>Saccharomycetales</taxon>
        <taxon>Saccharomycetaceae</taxon>
        <taxon>Saccharomyces</taxon>
    </lineage>
</organism>
<comment type="miscellaneous">
    <text evidence="2">Partially overlaps TIM9.</text>
</comment>
<comment type="caution">
    <text evidence="3">Product of a dubious gene prediction unlikely to encode a functional protein. Because of that it is not part of the S.cerevisiae S288c complete/reference proteome set.</text>
</comment>